<dbReference type="EMBL" id="M15664">
    <property type="protein sequence ID" value="AAA33907.1"/>
    <property type="molecule type" value="Genomic_DNA"/>
</dbReference>
<dbReference type="EMBL" id="X13678">
    <property type="protein sequence ID" value="CAA31969.1"/>
    <property type="molecule type" value="Genomic_DNA"/>
</dbReference>
<dbReference type="EMBL" id="X13680">
    <property type="protein sequence ID" value="CAA31970.1"/>
    <property type="molecule type" value="Genomic_DNA"/>
</dbReference>
<dbReference type="EMBL" id="AP003270">
    <property type="protein sequence ID" value="BAC01212.1"/>
    <property type="molecule type" value="Genomic_DNA"/>
</dbReference>
<dbReference type="EMBL" id="AL606618">
    <property type="protein sequence ID" value="CAE02924.1"/>
    <property type="molecule type" value="Genomic_DNA"/>
</dbReference>
<dbReference type="EMBL" id="AC134930">
    <property type="protein sequence ID" value="AAT07615.1"/>
    <property type="molecule type" value="Genomic_DNA"/>
</dbReference>
<dbReference type="EMBL" id="AB026295">
    <property type="protein sequence ID" value="BAA81840.1"/>
    <property type="molecule type" value="Genomic_DNA"/>
</dbReference>
<dbReference type="EMBL" id="AB026295">
    <property type="protein sequence ID" value="BAA81841.1"/>
    <property type="molecule type" value="Genomic_DNA"/>
</dbReference>
<dbReference type="EMBL" id="AP005828">
    <property type="protein sequence ID" value="BAD46448.1"/>
    <property type="molecule type" value="Genomic_DNA"/>
</dbReference>
<dbReference type="EMBL" id="AP005828">
    <property type="protein sequence ID" value="BAD46453.1"/>
    <property type="molecule type" value="Genomic_DNA"/>
</dbReference>
<dbReference type="EMBL" id="AP005828">
    <property type="protein sequence ID" value="BAD46454.1"/>
    <property type="molecule type" value="Genomic_DNA"/>
</dbReference>
<dbReference type="EMBL" id="AC112209">
    <property type="protein sequence ID" value="AAX92719.1"/>
    <property type="molecule type" value="Genomic_DNA"/>
</dbReference>
<dbReference type="EMBL" id="DP000010">
    <property type="protein sequence ID" value="ABA91537.2"/>
    <property type="molecule type" value="Genomic_DNA"/>
</dbReference>
<dbReference type="EMBL" id="AP008207">
    <property type="protein sequence ID" value="BAF06818.1"/>
    <property type="molecule type" value="Genomic_DNA"/>
</dbReference>
<dbReference type="EMBL" id="AP008210">
    <property type="protein sequence ID" value="BAF14690.1"/>
    <property type="molecule type" value="Genomic_DNA"/>
</dbReference>
<dbReference type="EMBL" id="AP008211">
    <property type="protein sequence ID" value="BAF17574.1"/>
    <property type="molecule type" value="Genomic_DNA"/>
</dbReference>
<dbReference type="EMBL" id="AP008212">
    <property type="protein sequence ID" value="BAF18791.1"/>
    <property type="molecule type" value="Genomic_DNA"/>
</dbReference>
<dbReference type="EMBL" id="AP008217">
    <property type="protein sequence ID" value="BAF27636.1"/>
    <property type="molecule type" value="Genomic_DNA"/>
</dbReference>
<dbReference type="EMBL" id="AP014957">
    <property type="status" value="NOT_ANNOTATED_CDS"/>
    <property type="molecule type" value="Genomic_DNA"/>
</dbReference>
<dbReference type="EMBL" id="AP014960">
    <property type="status" value="NOT_ANNOTATED_CDS"/>
    <property type="molecule type" value="Genomic_DNA"/>
</dbReference>
<dbReference type="EMBL" id="AP014961">
    <property type="status" value="NOT_ANNOTATED_CDS"/>
    <property type="molecule type" value="Genomic_DNA"/>
</dbReference>
<dbReference type="EMBL" id="AP014962">
    <property type="protein sequence ID" value="BAS96275.1"/>
    <property type="molecule type" value="Genomic_DNA"/>
</dbReference>
<dbReference type="EMBL" id="AP014967">
    <property type="protein sequence ID" value="BAT12754.1"/>
    <property type="molecule type" value="Genomic_DNA"/>
</dbReference>
<dbReference type="EMBL" id="CM000138">
    <property type="protein sequence ID" value="EAZ14271.1"/>
    <property type="molecule type" value="Genomic_DNA"/>
</dbReference>
<dbReference type="EMBL" id="CM000141">
    <property type="protein sequence ID" value="EAZ30723.1"/>
    <property type="molecule type" value="Genomic_DNA"/>
</dbReference>
<dbReference type="EMBL" id="CM000143">
    <property type="protein sequence ID" value="EAZ35903.1"/>
    <property type="molecule type" value="Genomic_DNA"/>
</dbReference>
<dbReference type="PIR" id="A25564">
    <property type="entry name" value="A25564"/>
</dbReference>
<dbReference type="PIR" id="S04099">
    <property type="entry name" value="S04099"/>
</dbReference>
<dbReference type="RefSeq" id="XP_015641515.1">
    <property type="nucleotide sequence ID" value="XM_015786029.1"/>
</dbReference>
<dbReference type="SMR" id="Q2RAD9"/>
<dbReference type="FunCoup" id="Q2RAD9">
    <property type="interactions" value="1839"/>
</dbReference>
<dbReference type="STRING" id="39947.Q2RAD9"/>
<dbReference type="PaxDb" id="39947-Q2RAD9"/>
<dbReference type="EnsemblPlants" id="Os06t0160001-00">
    <property type="protein sequence ID" value="Os06t0160001-00"/>
    <property type="gene ID" value="Os06g0160001"/>
</dbReference>
<dbReference type="EnsemblPlants" id="Os11t0155900-00">
    <property type="protein sequence ID" value="Os11t0155900-00"/>
    <property type="gene ID" value="Os11g0155900"/>
</dbReference>
<dbReference type="GeneID" id="4340203"/>
<dbReference type="GeneID" id="9271591"/>
<dbReference type="Gramene" id="Os06t0160001-00">
    <property type="protein sequence ID" value="Os06t0160001-00"/>
    <property type="gene ID" value="Os06g0160001"/>
</dbReference>
<dbReference type="Gramene" id="Os11t0155900-00">
    <property type="protein sequence ID" value="Os11t0155900-00"/>
    <property type="gene ID" value="Os11g0155900"/>
</dbReference>
<dbReference type="KEGG" id="dosa:Os01g0866200"/>
<dbReference type="KEGG" id="dosa:Os04g0419600"/>
<dbReference type="KEGG" id="dosa:Os05g0438700"/>
<dbReference type="KEGG" id="dosa:Os06g0160100"/>
<dbReference type="KEGG" id="dosa:Os11g0155900"/>
<dbReference type="KEGG" id="osa:4338913"/>
<dbReference type="KEGG" id="osa:4340203"/>
<dbReference type="KEGG" id="osa:4349820"/>
<dbReference type="KEGG" id="osa:9269345"/>
<dbReference type="KEGG" id="osa:9271591"/>
<dbReference type="eggNOG" id="KOG1745">
    <property type="taxonomic scope" value="Eukaryota"/>
</dbReference>
<dbReference type="HOGENOM" id="CLU_078295_4_0_1"/>
<dbReference type="InParanoid" id="Q2RAD9"/>
<dbReference type="Proteomes" id="UP000000763">
    <property type="component" value="Chromosome 1"/>
</dbReference>
<dbReference type="Proteomes" id="UP000000763">
    <property type="component" value="Chromosome 11"/>
</dbReference>
<dbReference type="Proteomes" id="UP000000763">
    <property type="component" value="Chromosome 4"/>
</dbReference>
<dbReference type="Proteomes" id="UP000000763">
    <property type="component" value="Chromosome 5"/>
</dbReference>
<dbReference type="Proteomes" id="UP000000763">
    <property type="component" value="Chromosome 6"/>
</dbReference>
<dbReference type="Proteomes" id="UP000007752">
    <property type="component" value="Chromosome 1"/>
</dbReference>
<dbReference type="Proteomes" id="UP000007752">
    <property type="component" value="Chromosome 4"/>
</dbReference>
<dbReference type="Proteomes" id="UP000007752">
    <property type="component" value="Chromosome 6"/>
</dbReference>
<dbReference type="Proteomes" id="UP000059680">
    <property type="component" value="Chromosome 1"/>
</dbReference>
<dbReference type="Proteomes" id="UP000059680">
    <property type="component" value="Chromosome 11"/>
</dbReference>
<dbReference type="Proteomes" id="UP000059680">
    <property type="component" value="Chromosome 4"/>
</dbReference>
<dbReference type="Proteomes" id="UP000059680">
    <property type="component" value="Chromosome 5"/>
</dbReference>
<dbReference type="Proteomes" id="UP000059680">
    <property type="component" value="Chromosome 6"/>
</dbReference>
<dbReference type="ExpressionAtlas" id="Q2RAD9">
    <property type="expression patterns" value="baseline and differential"/>
</dbReference>
<dbReference type="GO" id="GO:0000786">
    <property type="term" value="C:nucleosome"/>
    <property type="evidence" value="ECO:0007669"/>
    <property type="project" value="UniProtKB-KW"/>
</dbReference>
<dbReference type="GO" id="GO:0005634">
    <property type="term" value="C:nucleus"/>
    <property type="evidence" value="ECO:0000318"/>
    <property type="project" value="GO_Central"/>
</dbReference>
<dbReference type="GO" id="GO:0003677">
    <property type="term" value="F:DNA binding"/>
    <property type="evidence" value="ECO:0007669"/>
    <property type="project" value="UniProtKB-KW"/>
</dbReference>
<dbReference type="GO" id="GO:0046982">
    <property type="term" value="F:protein heterodimerization activity"/>
    <property type="evidence" value="ECO:0007669"/>
    <property type="project" value="InterPro"/>
</dbReference>
<dbReference type="GO" id="GO:0030527">
    <property type="term" value="F:structural constituent of chromatin"/>
    <property type="evidence" value="ECO:0007669"/>
    <property type="project" value="InterPro"/>
</dbReference>
<dbReference type="CDD" id="cd22911">
    <property type="entry name" value="HFD_H3"/>
    <property type="match status" value="1"/>
</dbReference>
<dbReference type="FunFam" id="1.10.20.10:FF:000078">
    <property type="entry name" value="Histone H3"/>
    <property type="match status" value="1"/>
</dbReference>
<dbReference type="FunFam" id="1.10.20.10:FF:000044">
    <property type="entry name" value="Histone H3.3"/>
    <property type="match status" value="1"/>
</dbReference>
<dbReference type="Gene3D" id="1.10.20.10">
    <property type="entry name" value="Histone, subunit A"/>
    <property type="match status" value="1"/>
</dbReference>
<dbReference type="InterPro" id="IPR009072">
    <property type="entry name" value="Histone-fold"/>
</dbReference>
<dbReference type="InterPro" id="IPR007125">
    <property type="entry name" value="Histone_H2A/H2B/H3"/>
</dbReference>
<dbReference type="InterPro" id="IPR000164">
    <property type="entry name" value="Histone_H3/CENP-A"/>
</dbReference>
<dbReference type="PANTHER" id="PTHR11426">
    <property type="entry name" value="HISTONE H3"/>
    <property type="match status" value="1"/>
</dbReference>
<dbReference type="Pfam" id="PF00125">
    <property type="entry name" value="Histone"/>
    <property type="match status" value="1"/>
</dbReference>
<dbReference type="PRINTS" id="PR00622">
    <property type="entry name" value="HISTONEH3"/>
</dbReference>
<dbReference type="SMART" id="SM00428">
    <property type="entry name" value="H3"/>
    <property type="match status" value="1"/>
</dbReference>
<dbReference type="SUPFAM" id="SSF47113">
    <property type="entry name" value="Histone-fold"/>
    <property type="match status" value="1"/>
</dbReference>
<dbReference type="PROSITE" id="PS00322">
    <property type="entry name" value="HISTONE_H3_1"/>
    <property type="match status" value="1"/>
</dbReference>
<dbReference type="PROSITE" id="PS00959">
    <property type="entry name" value="HISTONE_H3_2"/>
    <property type="match status" value="1"/>
</dbReference>
<keyword id="KW-0007">Acetylation</keyword>
<keyword id="KW-0158">Chromosome</keyword>
<keyword id="KW-0238">DNA-binding</keyword>
<keyword id="KW-0488">Methylation</keyword>
<keyword id="KW-0544">Nucleosome core</keyword>
<keyword id="KW-0539">Nucleus</keyword>
<keyword id="KW-0597">Phosphoprotein</keyword>
<keyword id="KW-1185">Reference proteome</keyword>
<comment type="function">
    <text>Core component of nucleosome. Nucleosomes wrap and compact DNA into chromatin, limiting DNA accessibility to the cellular machineries which require DNA as a template. Histones thereby play a central role in transcription regulation, DNA repair, DNA replication and chromosomal stability. DNA accessibility is regulated via a complex set of post-translational modifications of histones, also called histone code, and nucleosome remodeling.</text>
</comment>
<comment type="subunit">
    <text>The nucleosome is a histone octamer containing two molecules each of H2A, H2B, H3 and H4 assembled in one H3-H4 heterotetramer and two H2A-H2B heterodimers. The octamer wraps approximately 147 bp of DNA.</text>
</comment>
<comment type="subcellular location">
    <subcellularLocation>
        <location evidence="1">Nucleus</location>
    </subcellularLocation>
    <subcellularLocation>
        <location evidence="1">Chromosome</location>
    </subcellularLocation>
</comment>
<comment type="PTM">
    <text evidence="1">Acetylation is generally linked to gene activation. Can be acetylated to form H3K9ac, H3K14ac, H3K18ac and H3K23ac. H3K9ac could compete with H3K9me and prevent gene silencing. H3K9ac is restricted to euchromatin (By similarity).</text>
</comment>
<comment type="PTM">
    <text evidence="1">Methylated to form mainly H3K4me, H3K9me, H3K18me, H3K23me, H3K27me and H3K36me. H3K4me1/2/3, H3K9me3, H3K27me3 and H3K36me1/2/3 are typical marks for euchromatin, whereas heterochromatic chromocenters are enriched in H3K9me1/2 and H3K27me1/2. H2BK143ub1 is probably prerequisite for H3K4me (By similarity).</text>
</comment>
<comment type="PTM">
    <text evidence="1">Can be phosphorylated to form H3S10ph, H3T11ph and H3S28ph.</text>
</comment>
<comment type="similarity">
    <text evidence="3">Belongs to the histone H3 family.</text>
</comment>
<comment type="caution">
    <text evidence="3">To ensure consistency between histone entries, we follow the 'Brno' nomenclature for histone modifications, with positions referring to those used in the literature for the 'closest' model organism. Due to slight variations in histone sequences between organisms and to the presence of initiator methionine in UniProtKB/Swiss-Prot sequences, the actual positions of modified amino acids in the sequence generally differ. In this entry the following conventions are used: H3K4me = methylated Lys-5; H3K9ac = acetylated Lys-10; H3K9me = methylated Lys-10; H3S10ph = phosphorylated Ser-11; H3T11ph = phosphorylated Thr-12; H3K14ac = acetylated Lys-15; H3K18ac = acetylated Lys-19; H3K18me = methylated Lys-19; H3K23ac = acetylated Lys-24; H3K23me = methylated Lys-24; H3K27me = methylated Lys-28; H3S28ph = phosphorylated Ser-29; H3K36me = methylated Lys-37.</text>
</comment>
<proteinExistence type="inferred from homology"/>
<reference key="1">
    <citation type="journal article" date="1986" name="Gene">
        <title>A simple and rapid nucleotide sequencing strategy and its application in analyzing a rice histone 3 gene.</title>
        <authorList>
            <person name="Peng Z.-G."/>
            <person name="Wu R."/>
        </authorList>
    </citation>
    <scope>NUCLEOTIDE SEQUENCE [GENOMIC DNA]</scope>
</reference>
<reference key="2">
    <citation type="journal article" date="1989" name="Nucleic Acids Res.">
        <title>The nucleotide sequences of two rice histone H3 genes.</title>
        <authorList>
            <person name="Wu S.C."/>
            <person name="Vegh Z."/>
            <person name="Wang X.-M."/>
            <person name="Tan C.C."/>
            <person name="Dudits D."/>
        </authorList>
    </citation>
    <scope>NUCLEOTIDE SEQUENCE [GENOMIC DNA]</scope>
    <source>
        <strain>cv. Nipponbare</strain>
    </source>
</reference>
<reference key="3">
    <citation type="journal article" date="2002" name="Nature">
        <title>The genome sequence and structure of rice chromosome 1.</title>
        <authorList>
            <person name="Sasaki T."/>
            <person name="Matsumoto T."/>
            <person name="Yamamoto K."/>
            <person name="Sakata K."/>
            <person name="Baba T."/>
            <person name="Katayose Y."/>
            <person name="Wu J."/>
            <person name="Niimura Y."/>
            <person name="Cheng Z."/>
            <person name="Nagamura Y."/>
            <person name="Antonio B.A."/>
            <person name="Kanamori H."/>
            <person name="Hosokawa S."/>
            <person name="Masukawa M."/>
            <person name="Arikawa K."/>
            <person name="Chiden Y."/>
            <person name="Hayashi M."/>
            <person name="Okamoto M."/>
            <person name="Ando T."/>
            <person name="Aoki H."/>
            <person name="Arita K."/>
            <person name="Hamada M."/>
            <person name="Harada C."/>
            <person name="Hijishita S."/>
            <person name="Honda M."/>
            <person name="Ichikawa Y."/>
            <person name="Idonuma A."/>
            <person name="Iijima M."/>
            <person name="Ikeda M."/>
            <person name="Ikeno M."/>
            <person name="Ito S."/>
            <person name="Ito T."/>
            <person name="Ito Y."/>
            <person name="Ito Y."/>
            <person name="Iwabuchi A."/>
            <person name="Kamiya K."/>
            <person name="Karasawa W."/>
            <person name="Katagiri S."/>
            <person name="Kikuta A."/>
            <person name="Kobayashi N."/>
            <person name="Kono I."/>
            <person name="Machita K."/>
            <person name="Maehara T."/>
            <person name="Mizuno H."/>
            <person name="Mizubayashi T."/>
            <person name="Mukai Y."/>
            <person name="Nagasaki H."/>
            <person name="Nakashima M."/>
            <person name="Nakama Y."/>
            <person name="Nakamichi Y."/>
            <person name="Nakamura M."/>
            <person name="Namiki N."/>
            <person name="Negishi M."/>
            <person name="Ohta I."/>
            <person name="Ono N."/>
            <person name="Saji S."/>
            <person name="Sakai K."/>
            <person name="Shibata M."/>
            <person name="Shimokawa T."/>
            <person name="Shomura A."/>
            <person name="Song J."/>
            <person name="Takazaki Y."/>
            <person name="Terasawa K."/>
            <person name="Tsuji K."/>
            <person name="Waki K."/>
            <person name="Yamagata H."/>
            <person name="Yamane H."/>
            <person name="Yoshiki S."/>
            <person name="Yoshihara R."/>
            <person name="Yukawa K."/>
            <person name="Zhong H."/>
            <person name="Iwama H."/>
            <person name="Endo T."/>
            <person name="Ito H."/>
            <person name="Hahn J.H."/>
            <person name="Kim H.-I."/>
            <person name="Eun M.-Y."/>
            <person name="Yano M."/>
            <person name="Jiang J."/>
            <person name="Gojobori T."/>
        </authorList>
    </citation>
    <scope>NUCLEOTIDE SEQUENCE [LARGE SCALE GENOMIC DNA]</scope>
    <source>
        <strain>cv. Nipponbare</strain>
    </source>
</reference>
<reference key="4">
    <citation type="journal article" date="2002" name="Nature">
        <title>Sequence and analysis of rice chromosome 4.</title>
        <authorList>
            <person name="Feng Q."/>
            <person name="Zhang Y."/>
            <person name="Hao P."/>
            <person name="Wang S."/>
            <person name="Fu G."/>
            <person name="Huang Y."/>
            <person name="Li Y."/>
            <person name="Zhu J."/>
            <person name="Liu Y."/>
            <person name="Hu X."/>
            <person name="Jia P."/>
            <person name="Zhang Y."/>
            <person name="Zhao Q."/>
            <person name="Ying K."/>
            <person name="Yu S."/>
            <person name="Tang Y."/>
            <person name="Weng Q."/>
            <person name="Zhang L."/>
            <person name="Lu Y."/>
            <person name="Mu J."/>
            <person name="Lu Y."/>
            <person name="Zhang L.S."/>
            <person name="Yu Z."/>
            <person name="Fan D."/>
            <person name="Liu X."/>
            <person name="Lu T."/>
            <person name="Li C."/>
            <person name="Wu Y."/>
            <person name="Sun T."/>
            <person name="Lei H."/>
            <person name="Li T."/>
            <person name="Hu H."/>
            <person name="Guan J."/>
            <person name="Wu M."/>
            <person name="Zhang R."/>
            <person name="Zhou B."/>
            <person name="Chen Z."/>
            <person name="Chen L."/>
            <person name="Jin Z."/>
            <person name="Wang R."/>
            <person name="Yin H."/>
            <person name="Cai Z."/>
            <person name="Ren S."/>
            <person name="Lv G."/>
            <person name="Gu W."/>
            <person name="Zhu G."/>
            <person name="Tu Y."/>
            <person name="Jia J."/>
            <person name="Zhang Y."/>
            <person name="Chen J."/>
            <person name="Kang H."/>
            <person name="Chen X."/>
            <person name="Shao C."/>
            <person name="Sun Y."/>
            <person name="Hu Q."/>
            <person name="Zhang X."/>
            <person name="Zhang W."/>
            <person name="Wang L."/>
            <person name="Ding C."/>
            <person name="Sheng H."/>
            <person name="Gu J."/>
            <person name="Chen S."/>
            <person name="Ni L."/>
            <person name="Zhu F."/>
            <person name="Chen W."/>
            <person name="Lan L."/>
            <person name="Lai Y."/>
            <person name="Cheng Z."/>
            <person name="Gu M."/>
            <person name="Jiang J."/>
            <person name="Li J."/>
            <person name="Hong G."/>
            <person name="Xue Y."/>
            <person name="Han B."/>
        </authorList>
    </citation>
    <scope>NUCLEOTIDE SEQUENCE [LARGE SCALE GENOMIC DNA]</scope>
    <source>
        <strain>cv. Nipponbare</strain>
    </source>
</reference>
<reference key="5">
    <citation type="journal article" date="2005" name="Mol. Genet. Genomics">
        <title>A fine physical map of the rice chromosome 5.</title>
        <authorList>
            <person name="Cheng C.-H."/>
            <person name="Chung M.C."/>
            <person name="Liu S.-M."/>
            <person name="Chen S.-K."/>
            <person name="Kao F.Y."/>
            <person name="Lin S.-J."/>
            <person name="Hsiao S.-H."/>
            <person name="Tseng I.C."/>
            <person name="Hsing Y.-I.C."/>
            <person name="Wu H.-P."/>
            <person name="Chen C.-S."/>
            <person name="Shaw J.-F."/>
            <person name="Wu J."/>
            <person name="Matsumoto T."/>
            <person name="Sasaki T."/>
            <person name="Chen H.-C."/>
            <person name="Chow T.-Y."/>
        </authorList>
    </citation>
    <scope>NUCLEOTIDE SEQUENCE [LARGE SCALE GENOMIC DNA]</scope>
    <source>
        <strain>cv. Nipponbare</strain>
    </source>
</reference>
<reference key="6">
    <citation type="journal article" date="2005" name="BMC Biol.">
        <title>The sequence of rice chromosomes 11 and 12, rich in disease resistance genes and recent gene duplications.</title>
        <authorList>
            <consortium name="The rice chromosomes 11 and 12 sequencing consortia"/>
        </authorList>
    </citation>
    <scope>NUCLEOTIDE SEQUENCE [LARGE SCALE GENOMIC DNA]</scope>
    <source>
        <strain>cv. Nipponbare</strain>
    </source>
</reference>
<reference key="7">
    <citation type="journal article" date="2005" name="Nature">
        <title>The map-based sequence of the rice genome.</title>
        <authorList>
            <consortium name="International rice genome sequencing project (IRGSP)"/>
        </authorList>
    </citation>
    <scope>NUCLEOTIDE SEQUENCE [LARGE SCALE GENOMIC DNA]</scope>
    <source>
        <strain>cv. Nipponbare</strain>
    </source>
</reference>
<reference key="8">
    <citation type="journal article" date="2008" name="Nucleic Acids Res.">
        <title>The rice annotation project database (RAP-DB): 2008 update.</title>
        <authorList>
            <consortium name="The rice annotation project (RAP)"/>
        </authorList>
    </citation>
    <scope>GENOME REANNOTATION</scope>
    <source>
        <strain>cv. Nipponbare</strain>
    </source>
</reference>
<reference key="9">
    <citation type="journal article" date="2013" name="Rice">
        <title>Improvement of the Oryza sativa Nipponbare reference genome using next generation sequence and optical map data.</title>
        <authorList>
            <person name="Kawahara Y."/>
            <person name="de la Bastide M."/>
            <person name="Hamilton J.P."/>
            <person name="Kanamori H."/>
            <person name="McCombie W.R."/>
            <person name="Ouyang S."/>
            <person name="Schwartz D.C."/>
            <person name="Tanaka T."/>
            <person name="Wu J."/>
            <person name="Zhou S."/>
            <person name="Childs K.L."/>
            <person name="Davidson R.M."/>
            <person name="Lin H."/>
            <person name="Quesada-Ocampo L."/>
            <person name="Vaillancourt B."/>
            <person name="Sakai H."/>
            <person name="Lee S.S."/>
            <person name="Kim J."/>
            <person name="Numa H."/>
            <person name="Itoh T."/>
            <person name="Buell C.R."/>
            <person name="Matsumoto T."/>
        </authorList>
    </citation>
    <scope>GENOME REANNOTATION</scope>
    <source>
        <strain>cv. Nipponbare</strain>
    </source>
</reference>
<reference key="10">
    <citation type="journal article" date="2005" name="PLoS Biol.">
        <title>The genomes of Oryza sativa: a history of duplications.</title>
        <authorList>
            <person name="Yu J."/>
            <person name="Wang J."/>
            <person name="Lin W."/>
            <person name="Li S."/>
            <person name="Li H."/>
            <person name="Zhou J."/>
            <person name="Ni P."/>
            <person name="Dong W."/>
            <person name="Hu S."/>
            <person name="Zeng C."/>
            <person name="Zhang J."/>
            <person name="Zhang Y."/>
            <person name="Li R."/>
            <person name="Xu Z."/>
            <person name="Li S."/>
            <person name="Li X."/>
            <person name="Zheng H."/>
            <person name="Cong L."/>
            <person name="Lin L."/>
            <person name="Yin J."/>
            <person name="Geng J."/>
            <person name="Li G."/>
            <person name="Shi J."/>
            <person name="Liu J."/>
            <person name="Lv H."/>
            <person name="Li J."/>
            <person name="Wang J."/>
            <person name="Deng Y."/>
            <person name="Ran L."/>
            <person name="Shi X."/>
            <person name="Wang X."/>
            <person name="Wu Q."/>
            <person name="Li C."/>
            <person name="Ren X."/>
            <person name="Wang J."/>
            <person name="Wang X."/>
            <person name="Li D."/>
            <person name="Liu D."/>
            <person name="Zhang X."/>
            <person name="Ji Z."/>
            <person name="Zhao W."/>
            <person name="Sun Y."/>
            <person name="Zhang Z."/>
            <person name="Bao J."/>
            <person name="Han Y."/>
            <person name="Dong L."/>
            <person name="Ji J."/>
            <person name="Chen P."/>
            <person name="Wu S."/>
            <person name="Liu J."/>
            <person name="Xiao Y."/>
            <person name="Bu D."/>
            <person name="Tan J."/>
            <person name="Yang L."/>
            <person name="Ye C."/>
            <person name="Zhang J."/>
            <person name="Xu J."/>
            <person name="Zhou Y."/>
            <person name="Yu Y."/>
            <person name="Zhang B."/>
            <person name="Zhuang S."/>
            <person name="Wei H."/>
            <person name="Liu B."/>
            <person name="Lei M."/>
            <person name="Yu H."/>
            <person name="Li Y."/>
            <person name="Xu H."/>
            <person name="Wei S."/>
            <person name="He X."/>
            <person name="Fang L."/>
            <person name="Zhang Z."/>
            <person name="Zhang Y."/>
            <person name="Huang X."/>
            <person name="Su Z."/>
            <person name="Tong W."/>
            <person name="Li J."/>
            <person name="Tong Z."/>
            <person name="Li S."/>
            <person name="Ye J."/>
            <person name="Wang L."/>
            <person name="Fang L."/>
            <person name="Lei T."/>
            <person name="Chen C.-S."/>
            <person name="Chen H.-C."/>
            <person name="Xu Z."/>
            <person name="Li H."/>
            <person name="Huang H."/>
            <person name="Zhang F."/>
            <person name="Xu H."/>
            <person name="Li N."/>
            <person name="Zhao C."/>
            <person name="Li S."/>
            <person name="Dong L."/>
            <person name="Huang Y."/>
            <person name="Li L."/>
            <person name="Xi Y."/>
            <person name="Qi Q."/>
            <person name="Li W."/>
            <person name="Zhang B."/>
            <person name="Hu W."/>
            <person name="Zhang Y."/>
            <person name="Tian X."/>
            <person name="Jiao Y."/>
            <person name="Liang X."/>
            <person name="Jin J."/>
            <person name="Gao L."/>
            <person name="Zheng W."/>
            <person name="Hao B."/>
            <person name="Liu S.-M."/>
            <person name="Wang W."/>
            <person name="Yuan L."/>
            <person name="Cao M."/>
            <person name="McDermott J."/>
            <person name="Samudrala R."/>
            <person name="Wang J."/>
            <person name="Wong G.K.-S."/>
            <person name="Yang H."/>
        </authorList>
    </citation>
    <scope>NUCLEOTIDE SEQUENCE [LARGE SCALE GENOMIC DNA]</scope>
    <source>
        <strain>cv. Nipponbare</strain>
    </source>
</reference>
<evidence type="ECO:0000250" key="1"/>
<evidence type="ECO:0000256" key="2">
    <source>
        <dbReference type="SAM" id="MobiDB-lite"/>
    </source>
</evidence>
<evidence type="ECO:0000305" key="3"/>
<evidence type="ECO:0000312" key="4">
    <source>
        <dbReference type="EMBL" id="AAT07615.1"/>
    </source>
</evidence>
<evidence type="ECO:0000312" key="5">
    <source>
        <dbReference type="EMBL" id="AAX92719.1"/>
    </source>
</evidence>
<evidence type="ECO:0000312" key="6">
    <source>
        <dbReference type="EMBL" id="BAA81840.1"/>
    </source>
</evidence>
<evidence type="ECO:0000312" key="7">
    <source>
        <dbReference type="EMBL" id="BAA81841.1"/>
    </source>
</evidence>
<evidence type="ECO:0000312" key="8">
    <source>
        <dbReference type="EMBL" id="BAC01212.1"/>
    </source>
</evidence>
<evidence type="ECO:0000312" key="9">
    <source>
        <dbReference type="EMBL" id="BAD46448.1"/>
    </source>
</evidence>
<evidence type="ECO:0000312" key="10">
    <source>
        <dbReference type="EMBL" id="BAD46453.1"/>
    </source>
</evidence>
<evidence type="ECO:0000312" key="11">
    <source>
        <dbReference type="EMBL" id="BAD46454.1"/>
    </source>
</evidence>
<evidence type="ECO:0000312" key="12">
    <source>
        <dbReference type="EMBL" id="BAF06818.1"/>
    </source>
</evidence>
<evidence type="ECO:0000312" key="13">
    <source>
        <dbReference type="EMBL" id="BAF14690.1"/>
    </source>
</evidence>
<evidence type="ECO:0000312" key="14">
    <source>
        <dbReference type="EMBL" id="BAF17574.1"/>
    </source>
</evidence>
<evidence type="ECO:0000312" key="15">
    <source>
        <dbReference type="EMBL" id="BAF18791.1"/>
    </source>
</evidence>
<evidence type="ECO:0000312" key="16">
    <source>
        <dbReference type="EMBL" id="BAS96275.1"/>
    </source>
</evidence>
<evidence type="ECO:0000312" key="17">
    <source>
        <dbReference type="EMBL" id="BAT12754.1"/>
    </source>
</evidence>
<evidence type="ECO:0000312" key="18">
    <source>
        <dbReference type="EMBL" id="CAE02924.1"/>
    </source>
</evidence>
<evidence type="ECO:0000312" key="19">
    <source>
        <dbReference type="EMBL" id="EAZ14271.1"/>
    </source>
</evidence>
<evidence type="ECO:0000312" key="20">
    <source>
        <dbReference type="EMBL" id="EAZ30723.1"/>
    </source>
</evidence>
<evidence type="ECO:0000312" key="21">
    <source>
        <dbReference type="EMBL" id="EAZ35903.1"/>
    </source>
</evidence>
<accession>Q2RAD9</accession>
<accession>P05203</accession>
<accession>P05329</accession>
<accession>P05330</accession>
<accession>P08860</accession>
<accession>P69247</accession>
<accession>Q53WV5</accession>
<accession>Q7F4Z4</accession>
<organism>
    <name type="scientific">Oryza sativa subsp. japonica</name>
    <name type="common">Rice</name>
    <dbReference type="NCBI Taxonomy" id="39947"/>
    <lineage>
        <taxon>Eukaryota</taxon>
        <taxon>Viridiplantae</taxon>
        <taxon>Streptophyta</taxon>
        <taxon>Embryophyta</taxon>
        <taxon>Tracheophyta</taxon>
        <taxon>Spermatophyta</taxon>
        <taxon>Magnoliopsida</taxon>
        <taxon>Liliopsida</taxon>
        <taxon>Poales</taxon>
        <taxon>Poaceae</taxon>
        <taxon>BOP clade</taxon>
        <taxon>Oryzoideae</taxon>
        <taxon>Oryzeae</taxon>
        <taxon>Oryzinae</taxon>
        <taxon>Oryza</taxon>
        <taxon>Oryza sativa</taxon>
    </lineage>
</organism>
<gene>
    <name evidence="12" type="ordered locus">Os01g0866200</name>
    <name evidence="3" type="ordered locus">LOC_Os01g64640</name>
    <name evidence="19" type="ORF">OsJ_004096</name>
    <name evidence="8" type="ORF">P0505D12.33</name>
</gene>
<gene>
    <name evidence="13" type="ordered locus">Os04g0419600</name>
    <name evidence="3" type="ordered locus">LOC_Os04g34240</name>
    <name evidence="20" type="ORF">OsJ_014206</name>
    <name evidence="18" type="ORF">OSJNBb0108J11.17</name>
</gene>
<gene>
    <name evidence="14" type="ordered locus">Os05g0438700</name>
    <name evidence="3" type="ordered locus">LOC_Os05g36280</name>
    <name evidence="4" type="ORF">OSJNBb0042J17.11</name>
</gene>
<gene>
    <name type="primary">H3R-11</name>
    <name evidence="3" type="ordered locus">Os06g0159501</name>
    <name evidence="3" type="ordered locus">LOC_Os06g06460</name>
    <name evidence="21" type="ORF">OsJ_019386</name>
    <name evidence="9" type="ORF">P0702F05.33</name>
</gene>
<gene>
    <name evidence="16" type="ordered locus">Os06g0160001</name>
    <name evidence="6" type="ORF">P0681F10.3</name>
    <name evidence="10" type="ORF">P0702F05.38</name>
</gene>
<gene>
    <name evidence="15" type="ordered locus">Os06g0160100</name>
    <name evidence="3" type="ordered locus">LOC_Os06g06510</name>
    <name evidence="7" type="ORF">P0681F10.4</name>
    <name evidence="11" type="ORF">P0702F05.39</name>
</gene>
<gene>
    <name type="primary">H3R-21</name>
    <name evidence="17" type="ordered locus">Os11g0155900</name>
    <name evidence="3" type="ordered locus">LOC_Os11g05730</name>
    <name evidence="5" type="ORF">OSJNBb0030I09</name>
</gene>
<sequence length="136" mass="15268">MARTKQTARKSTGGKAPRKQLATKAARKSAPATGGVKKPHRFRPGTVALREIRKYQKSTELLIRKLPFQRLVREIAQDFKTDLRFQSSAVAALQEAAEAYLVGLFEDTNLCAIHAKRVTIMPKDIQLARRIRGERA</sequence>
<name>H32_ORYSJ</name>
<protein>
    <recommendedName>
        <fullName>Histone H3.2</fullName>
    </recommendedName>
</protein>
<feature type="initiator methionine" description="Removed" evidence="1">
    <location>
        <position position="1"/>
    </location>
</feature>
<feature type="chain" id="PRO_0000221289" description="Histone H3.2">
    <location>
        <begin position="2"/>
        <end position="136"/>
    </location>
</feature>
<feature type="region of interest" description="Disordered" evidence="2">
    <location>
        <begin position="1"/>
        <end position="43"/>
    </location>
</feature>
<feature type="modified residue" description="N6-methylated lysine" evidence="1">
    <location>
        <position position="5"/>
    </location>
</feature>
<feature type="modified residue" description="N6-acetyllysine; alternate" evidence="1">
    <location>
        <position position="10"/>
    </location>
</feature>
<feature type="modified residue" description="N6-methylated lysine; alternate" evidence="1">
    <location>
        <position position="10"/>
    </location>
</feature>
<feature type="modified residue" description="Phosphoserine" evidence="1">
    <location>
        <position position="11"/>
    </location>
</feature>
<feature type="modified residue" description="Phosphothreonine" evidence="1">
    <location>
        <position position="12"/>
    </location>
</feature>
<feature type="modified residue" description="N6-acetyllysine" evidence="1">
    <location>
        <position position="15"/>
    </location>
</feature>
<feature type="modified residue" description="N6-acetyllysine; alternate" evidence="1">
    <location>
        <position position="19"/>
    </location>
</feature>
<feature type="modified residue" description="N6-methylated lysine; alternate" evidence="1">
    <location>
        <position position="19"/>
    </location>
</feature>
<feature type="modified residue" description="N6-acetyllysine; alternate" evidence="1">
    <location>
        <position position="24"/>
    </location>
</feature>
<feature type="modified residue" description="N6-methylated lysine; alternate" evidence="1">
    <location>
        <position position="24"/>
    </location>
</feature>
<feature type="modified residue" description="N6-methylated lysine" evidence="1">
    <location>
        <position position="28"/>
    </location>
</feature>
<feature type="modified residue" description="Phosphoserine" evidence="1">
    <location>
        <position position="29"/>
    </location>
</feature>
<feature type="modified residue" description="N6-methylated lysine" evidence="1">
    <location>
        <position position="37"/>
    </location>
</feature>
<feature type="sequence conflict" description="In Ref. 1; AAA33907." evidence="3" ref="1">
    <original>S</original>
    <variation>T</variation>
    <location>
        <position position="87"/>
    </location>
</feature>
<feature type="sequence conflict" description="In Ref. 1; AAA33907." evidence="3" ref="1">
    <original>A</original>
    <variation>R</variation>
    <location>
        <position position="91"/>
    </location>
</feature>
<feature type="sequence conflict" description="In Ref. 1; AAA33907." evidence="3" ref="1">
    <original>A</original>
    <variation>R</variation>
    <location>
        <position position="99"/>
    </location>
</feature>